<protein>
    <recommendedName>
        <fullName>Phosphate acetyltransferase</fullName>
        <ecNumber>2.3.1.8</ecNumber>
    </recommendedName>
    <alternativeName>
        <fullName>Phosphotransacetylase</fullName>
    </alternativeName>
</protein>
<organism>
    <name type="scientific">Staphylococcus aureus (strain MSSA476)</name>
    <dbReference type="NCBI Taxonomy" id="282459"/>
    <lineage>
        <taxon>Bacteria</taxon>
        <taxon>Bacillati</taxon>
        <taxon>Bacillota</taxon>
        <taxon>Bacilli</taxon>
        <taxon>Bacillales</taxon>
        <taxon>Staphylococcaceae</taxon>
        <taxon>Staphylococcus</taxon>
    </lineage>
</organism>
<name>PTAS_STAAS</name>
<comment type="catalytic activity">
    <reaction>
        <text>acetyl-CoA + phosphate = acetyl phosphate + CoA</text>
        <dbReference type="Rhea" id="RHEA:19521"/>
        <dbReference type="ChEBI" id="CHEBI:22191"/>
        <dbReference type="ChEBI" id="CHEBI:43474"/>
        <dbReference type="ChEBI" id="CHEBI:57287"/>
        <dbReference type="ChEBI" id="CHEBI:57288"/>
        <dbReference type="EC" id="2.3.1.8"/>
    </reaction>
</comment>
<comment type="pathway">
    <text>Metabolic intermediate biosynthesis; acetyl-CoA biosynthesis; acetyl-CoA from acetate: step 2/2.</text>
</comment>
<comment type="subcellular location">
    <subcellularLocation>
        <location evidence="1">Cytoplasm</location>
    </subcellularLocation>
</comment>
<comment type="similarity">
    <text evidence="1">Belongs to the phosphate acetyltransferase and butyryltransferase family.</text>
</comment>
<feature type="chain" id="PRO_0000179144" description="Phosphate acetyltransferase">
    <location>
        <begin position="1"/>
        <end position="328"/>
    </location>
</feature>
<accession>Q6GBP8</accession>
<reference key="1">
    <citation type="journal article" date="2004" name="Proc. Natl. Acad. Sci. U.S.A.">
        <title>Complete genomes of two clinical Staphylococcus aureus strains: evidence for the rapid evolution of virulence and drug resistance.</title>
        <authorList>
            <person name="Holden M.T.G."/>
            <person name="Feil E.J."/>
            <person name="Lindsay J.A."/>
            <person name="Peacock S.J."/>
            <person name="Day N.P.J."/>
            <person name="Enright M.C."/>
            <person name="Foster T.J."/>
            <person name="Moore C.E."/>
            <person name="Hurst L."/>
            <person name="Atkin R."/>
            <person name="Barron A."/>
            <person name="Bason N."/>
            <person name="Bentley S.D."/>
            <person name="Chillingworth C."/>
            <person name="Chillingworth T."/>
            <person name="Churcher C."/>
            <person name="Clark L."/>
            <person name="Corton C."/>
            <person name="Cronin A."/>
            <person name="Doggett J."/>
            <person name="Dowd L."/>
            <person name="Feltwell T."/>
            <person name="Hance Z."/>
            <person name="Harris B."/>
            <person name="Hauser H."/>
            <person name="Holroyd S."/>
            <person name="Jagels K."/>
            <person name="James K.D."/>
            <person name="Lennard N."/>
            <person name="Line A."/>
            <person name="Mayes R."/>
            <person name="Moule S."/>
            <person name="Mungall K."/>
            <person name="Ormond D."/>
            <person name="Quail M.A."/>
            <person name="Rabbinowitsch E."/>
            <person name="Rutherford K.M."/>
            <person name="Sanders M."/>
            <person name="Sharp S."/>
            <person name="Simmonds M."/>
            <person name="Stevens K."/>
            <person name="Whitehead S."/>
            <person name="Barrell B.G."/>
            <person name="Spratt B.G."/>
            <person name="Parkhill J."/>
        </authorList>
    </citation>
    <scope>NUCLEOTIDE SEQUENCE [LARGE SCALE GENOMIC DNA]</scope>
    <source>
        <strain>MSSA476</strain>
    </source>
</reference>
<gene>
    <name type="primary">pta</name>
    <name type="ordered locus">SAS0547</name>
</gene>
<keyword id="KW-0012">Acyltransferase</keyword>
<keyword id="KW-0963">Cytoplasm</keyword>
<keyword id="KW-0808">Transferase</keyword>
<proteinExistence type="inferred from homology"/>
<dbReference type="EC" id="2.3.1.8"/>
<dbReference type="EMBL" id="BX571857">
    <property type="protein sequence ID" value="CAG42322.1"/>
    <property type="molecule type" value="Genomic_DNA"/>
</dbReference>
<dbReference type="RefSeq" id="WP_000774282.1">
    <property type="nucleotide sequence ID" value="NC_002953.3"/>
</dbReference>
<dbReference type="SMR" id="Q6GBP8"/>
<dbReference type="KEGG" id="sas:SAS0547"/>
<dbReference type="HOGENOM" id="CLU_019723_0_1_9"/>
<dbReference type="UniPathway" id="UPA00340">
    <property type="reaction ID" value="UER00459"/>
</dbReference>
<dbReference type="GO" id="GO:0005737">
    <property type="term" value="C:cytoplasm"/>
    <property type="evidence" value="ECO:0007669"/>
    <property type="project" value="UniProtKB-SubCell"/>
</dbReference>
<dbReference type="GO" id="GO:0008959">
    <property type="term" value="F:phosphate acetyltransferase activity"/>
    <property type="evidence" value="ECO:0007669"/>
    <property type="project" value="UniProtKB-EC"/>
</dbReference>
<dbReference type="GO" id="GO:0006085">
    <property type="term" value="P:acetyl-CoA biosynthetic process"/>
    <property type="evidence" value="ECO:0007669"/>
    <property type="project" value="UniProtKB-UniPathway"/>
</dbReference>
<dbReference type="Gene3D" id="3.40.50.10950">
    <property type="match status" value="1"/>
</dbReference>
<dbReference type="Gene3D" id="3.40.50.10750">
    <property type="entry name" value="Isocitrate/Isopropylmalate dehydrogenase-like"/>
    <property type="match status" value="1"/>
</dbReference>
<dbReference type="InterPro" id="IPR012147">
    <property type="entry name" value="P_Ac_Bu_trans"/>
</dbReference>
<dbReference type="InterPro" id="IPR004614">
    <property type="entry name" value="P_AcTrfase"/>
</dbReference>
<dbReference type="InterPro" id="IPR042113">
    <property type="entry name" value="P_AcTrfase_dom1"/>
</dbReference>
<dbReference type="InterPro" id="IPR042112">
    <property type="entry name" value="P_AcTrfase_dom2"/>
</dbReference>
<dbReference type="InterPro" id="IPR050500">
    <property type="entry name" value="Phos_Acetyltrans/Butyryltrans"/>
</dbReference>
<dbReference type="InterPro" id="IPR002505">
    <property type="entry name" value="PTA_PTB"/>
</dbReference>
<dbReference type="NCBIfam" id="NF007233">
    <property type="entry name" value="PRK09653.1"/>
    <property type="match status" value="1"/>
</dbReference>
<dbReference type="NCBIfam" id="TIGR00651">
    <property type="entry name" value="pta"/>
    <property type="match status" value="1"/>
</dbReference>
<dbReference type="PANTHER" id="PTHR43356">
    <property type="entry name" value="PHOSPHATE ACETYLTRANSFERASE"/>
    <property type="match status" value="1"/>
</dbReference>
<dbReference type="PANTHER" id="PTHR43356:SF3">
    <property type="entry name" value="PHOSPHATE ACETYLTRANSFERASE"/>
    <property type="match status" value="1"/>
</dbReference>
<dbReference type="Pfam" id="PF01515">
    <property type="entry name" value="PTA_PTB"/>
    <property type="match status" value="1"/>
</dbReference>
<dbReference type="PIRSF" id="PIRSF000428">
    <property type="entry name" value="P_Ac_trans"/>
    <property type="match status" value="1"/>
</dbReference>
<dbReference type="SUPFAM" id="SSF53659">
    <property type="entry name" value="Isocitrate/Isopropylmalate dehydrogenase-like"/>
    <property type="match status" value="1"/>
</dbReference>
<evidence type="ECO:0000305" key="1"/>
<sequence length="328" mass="34922">MADLLNVLKDKLSGKNVKIVLPEGEDERVLTAATQLQATDYVTPIVLGDETKVQSLAQKLDLDISNIELINPATSELKAELVQSFVERRKGKATEEQAQELLNNVNYFGTMLVYAGKADGLVSGAAHSTGDTVRPALQIIKTKPGVSRTSGIFFMIKGDVQYIFGDCAINPELDSQGLAEIAVESAKSALSFGMDPKVAMLSFSTKGSAKSDDVTKVQEAVKLAQQKAEEEKLEAIIDGEFQFDAAIVPGVAEKKAPGAKLQGDANVFVFPSLEAGNIGYKIAQRLGGYDAVGPVLQGLNSPVNDLSRGCSIEDVYNLSIITAAQALQ</sequence>